<keyword id="KW-0113">Calvin cycle</keyword>
<keyword id="KW-0119">Carbohydrate metabolism</keyword>
<keyword id="KW-0378">Hydrolase</keyword>
<keyword id="KW-0464">Manganese</keyword>
<keyword id="KW-0479">Metal-binding</keyword>
<feature type="chain" id="PRO_0000342723" description="D-fructose 1,6-bisphosphatase class 2/sedoheptulose 1,7-bisphosphatase">
    <location>
        <begin position="1"/>
        <end position="333"/>
    </location>
</feature>
<feature type="binding site" evidence="1">
    <location>
        <position position="33"/>
    </location>
    <ligand>
        <name>Mn(2+)</name>
        <dbReference type="ChEBI" id="CHEBI:29035"/>
        <label>1</label>
    </ligand>
</feature>
<feature type="binding site" evidence="1">
    <location>
        <position position="57"/>
    </location>
    <ligand>
        <name>Mn(2+)</name>
        <dbReference type="ChEBI" id="CHEBI:29035"/>
        <label>1</label>
    </ligand>
</feature>
<feature type="binding site" evidence="1">
    <location>
        <position position="85"/>
    </location>
    <ligand>
        <name>Mn(2+)</name>
        <dbReference type="ChEBI" id="CHEBI:29035"/>
        <label>2</label>
    </ligand>
</feature>
<feature type="binding site" evidence="1">
    <location>
        <begin position="88"/>
        <end position="90"/>
    </location>
    <ligand>
        <name>substrate</name>
    </ligand>
</feature>
<feature type="binding site" evidence="1">
    <location>
        <position position="88"/>
    </location>
    <ligand>
        <name>Mn(2+)</name>
        <dbReference type="ChEBI" id="CHEBI:29035"/>
        <label>2</label>
    </ligand>
</feature>
<feature type="binding site" evidence="1">
    <location>
        <position position="119"/>
    </location>
    <ligand>
        <name>substrate</name>
    </ligand>
</feature>
<feature type="binding site" evidence="1">
    <location>
        <begin position="164"/>
        <end position="166"/>
    </location>
    <ligand>
        <name>substrate</name>
    </ligand>
</feature>
<feature type="binding site" evidence="1">
    <location>
        <begin position="186"/>
        <end position="188"/>
    </location>
    <ligand>
        <name>substrate</name>
    </ligand>
</feature>
<feature type="binding site" evidence="1">
    <location>
        <position position="213"/>
    </location>
    <ligand>
        <name>Mn(2+)</name>
        <dbReference type="ChEBI" id="CHEBI:29035"/>
        <label>2</label>
    </ligand>
</feature>
<evidence type="ECO:0000250" key="1"/>
<evidence type="ECO:0000305" key="2"/>
<dbReference type="EC" id="3.1.3.11"/>
<dbReference type="EC" id="3.1.3.37"/>
<dbReference type="EMBL" id="BX548174">
    <property type="protein sequence ID" value="CAE19226.1"/>
    <property type="molecule type" value="Genomic_DNA"/>
</dbReference>
<dbReference type="SMR" id="Q7V1T8"/>
<dbReference type="STRING" id="59919.PMM0767"/>
<dbReference type="KEGG" id="pmm:PMM0767"/>
<dbReference type="eggNOG" id="COG1494">
    <property type="taxonomic scope" value="Bacteria"/>
</dbReference>
<dbReference type="HOGENOM" id="CLU_054938_0_0_3"/>
<dbReference type="OrthoDB" id="9779353at2"/>
<dbReference type="UniPathway" id="UPA00116"/>
<dbReference type="Proteomes" id="UP000001026">
    <property type="component" value="Chromosome"/>
</dbReference>
<dbReference type="GO" id="GO:0005829">
    <property type="term" value="C:cytosol"/>
    <property type="evidence" value="ECO:0007669"/>
    <property type="project" value="TreeGrafter"/>
</dbReference>
<dbReference type="GO" id="GO:0042132">
    <property type="term" value="F:fructose 1,6-bisphosphate 1-phosphatase activity"/>
    <property type="evidence" value="ECO:0007669"/>
    <property type="project" value="UniProtKB-EC"/>
</dbReference>
<dbReference type="GO" id="GO:0046872">
    <property type="term" value="F:metal ion binding"/>
    <property type="evidence" value="ECO:0007669"/>
    <property type="project" value="UniProtKB-KW"/>
</dbReference>
<dbReference type="GO" id="GO:0050278">
    <property type="term" value="F:sedoheptulose-bisphosphatase activity"/>
    <property type="evidence" value="ECO:0007669"/>
    <property type="project" value="UniProtKB-EC"/>
</dbReference>
<dbReference type="GO" id="GO:0030388">
    <property type="term" value="P:fructose 1,6-bisphosphate metabolic process"/>
    <property type="evidence" value="ECO:0007669"/>
    <property type="project" value="TreeGrafter"/>
</dbReference>
<dbReference type="GO" id="GO:0006094">
    <property type="term" value="P:gluconeogenesis"/>
    <property type="evidence" value="ECO:0007669"/>
    <property type="project" value="InterPro"/>
</dbReference>
<dbReference type="GO" id="GO:0006071">
    <property type="term" value="P:glycerol metabolic process"/>
    <property type="evidence" value="ECO:0007669"/>
    <property type="project" value="InterPro"/>
</dbReference>
<dbReference type="GO" id="GO:0019253">
    <property type="term" value="P:reductive pentose-phosphate cycle"/>
    <property type="evidence" value="ECO:0007669"/>
    <property type="project" value="UniProtKB-UniPathway"/>
</dbReference>
<dbReference type="CDD" id="cd01516">
    <property type="entry name" value="FBPase_glpX"/>
    <property type="match status" value="1"/>
</dbReference>
<dbReference type="FunFam" id="3.40.190.90:FF:000001">
    <property type="entry name" value="Fructose-1,6-bisphosphatase"/>
    <property type="match status" value="1"/>
</dbReference>
<dbReference type="Gene3D" id="3.40.190.90">
    <property type="match status" value="1"/>
</dbReference>
<dbReference type="Gene3D" id="3.30.540.10">
    <property type="entry name" value="Fructose-1,6-Bisphosphatase, subunit A, domain 1"/>
    <property type="match status" value="1"/>
</dbReference>
<dbReference type="InterPro" id="IPR004464">
    <property type="entry name" value="FBPase_class-2/SBPase"/>
</dbReference>
<dbReference type="NCBIfam" id="TIGR00330">
    <property type="entry name" value="glpX"/>
    <property type="match status" value="1"/>
</dbReference>
<dbReference type="PANTHER" id="PTHR30447:SF0">
    <property type="entry name" value="FRUCTOSE-1,6-BISPHOSPHATASE 1 CLASS 2-RELATED"/>
    <property type="match status" value="1"/>
</dbReference>
<dbReference type="PANTHER" id="PTHR30447">
    <property type="entry name" value="FRUCTOSE-1,6-BISPHOSPHATASE CLASS 2"/>
    <property type="match status" value="1"/>
</dbReference>
<dbReference type="Pfam" id="PF03320">
    <property type="entry name" value="FBPase_glpX"/>
    <property type="match status" value="1"/>
</dbReference>
<dbReference type="PIRSF" id="PIRSF004532">
    <property type="entry name" value="GlpX"/>
    <property type="match status" value="1"/>
</dbReference>
<dbReference type="SUPFAM" id="SSF56655">
    <property type="entry name" value="Carbohydrate phosphatase"/>
    <property type="match status" value="1"/>
</dbReference>
<reference key="1">
    <citation type="journal article" date="2003" name="Nature">
        <title>Genome divergence in two Prochlorococcus ecotypes reflects oceanic niche differentiation.</title>
        <authorList>
            <person name="Rocap G."/>
            <person name="Larimer F.W."/>
            <person name="Lamerdin J.E."/>
            <person name="Malfatti S."/>
            <person name="Chain P."/>
            <person name="Ahlgren N.A."/>
            <person name="Arellano A."/>
            <person name="Coleman M."/>
            <person name="Hauser L."/>
            <person name="Hess W.R."/>
            <person name="Johnson Z.I."/>
            <person name="Land M.L."/>
            <person name="Lindell D."/>
            <person name="Post A.F."/>
            <person name="Regala W."/>
            <person name="Shah M."/>
            <person name="Shaw S.L."/>
            <person name="Steglich C."/>
            <person name="Sullivan M.B."/>
            <person name="Ting C.S."/>
            <person name="Tolonen A."/>
            <person name="Webb E.A."/>
            <person name="Zinser E.R."/>
            <person name="Chisholm S.W."/>
        </authorList>
    </citation>
    <scope>NUCLEOTIDE SEQUENCE [LARGE SCALE GENOMIC DNA]</scope>
    <source>
        <strain>CCMP1986 / NIES-2087 / MED4</strain>
    </source>
</reference>
<organism>
    <name type="scientific">Prochlorococcus marinus subsp. pastoris (strain CCMP1986 / NIES-2087 / MED4)</name>
    <dbReference type="NCBI Taxonomy" id="59919"/>
    <lineage>
        <taxon>Bacteria</taxon>
        <taxon>Bacillati</taxon>
        <taxon>Cyanobacteriota</taxon>
        <taxon>Cyanophyceae</taxon>
        <taxon>Synechococcales</taxon>
        <taxon>Prochlorococcaceae</taxon>
        <taxon>Prochlorococcus</taxon>
    </lineage>
</organism>
<name>FBSB_PROMP</name>
<protein>
    <recommendedName>
        <fullName>D-fructose 1,6-bisphosphatase class 2/sedoheptulose 1,7-bisphosphatase</fullName>
        <shortName>FBPase class 2/SBPase</shortName>
        <ecNumber>3.1.3.11</ecNumber>
        <ecNumber>3.1.3.37</ecNumber>
    </recommendedName>
</protein>
<comment type="function">
    <text evidence="1">Catalyzes the hydrolysis of fructose 1,6-bisphosphate (Fru 1,6-P2) and sedoheptulose 1,7-bisphosphate (Sed 1,7-P2) to fructose 6-phosphate and sedoheptulose 7-phosphate, respectively.</text>
</comment>
<comment type="catalytic activity">
    <reaction>
        <text>beta-D-fructose 1,6-bisphosphate + H2O = beta-D-fructose 6-phosphate + phosphate</text>
        <dbReference type="Rhea" id="RHEA:11064"/>
        <dbReference type="ChEBI" id="CHEBI:15377"/>
        <dbReference type="ChEBI" id="CHEBI:32966"/>
        <dbReference type="ChEBI" id="CHEBI:43474"/>
        <dbReference type="ChEBI" id="CHEBI:57634"/>
        <dbReference type="EC" id="3.1.3.11"/>
    </reaction>
</comment>
<comment type="catalytic activity">
    <reaction>
        <text>D-sedoheptulose 1,7-bisphosphate + H2O = D-sedoheptulose 7-phosphate + phosphate</text>
        <dbReference type="Rhea" id="RHEA:17461"/>
        <dbReference type="ChEBI" id="CHEBI:15377"/>
        <dbReference type="ChEBI" id="CHEBI:43474"/>
        <dbReference type="ChEBI" id="CHEBI:57483"/>
        <dbReference type="ChEBI" id="CHEBI:58335"/>
        <dbReference type="EC" id="3.1.3.37"/>
    </reaction>
</comment>
<comment type="cofactor">
    <cofactor evidence="1">
        <name>Mn(2+)</name>
        <dbReference type="ChEBI" id="CHEBI:29035"/>
    </cofactor>
</comment>
<comment type="pathway">
    <text>Carbohydrate biosynthesis; Calvin cycle.</text>
</comment>
<comment type="subunit">
    <text evidence="1">Homotetramer.</text>
</comment>
<comment type="similarity">
    <text evidence="2">Belongs to the FBPase class 2 family.</text>
</comment>
<gene>
    <name type="ordered locus">PMM0767</name>
</gene>
<sequence length="333" mass="35150">MNQTLIQEILEVVEQAAIASAKLTGLGQKDEADAAAVEAMRLRMGKIEMKGKIVIGEGERDEAPMLYIGEEVGSGNGPGVDFAVDPCEGTNLCANNQRGSMAVLAASDTGGLFNAPDFYMNKLAAPPAAKGKVDIRNSATENLKILSNCLDLAIDELTVVVMDRARHKGLIKEIRECGAKIQPISDGDVQAAIACGFAGTGTHCLMGIGAAPEGVISAAAMRALGGHFQGQLVYDPAIAQTSEWADYTKEGNIKRLNEMGITDIDKIYEANELASGENVIFAGSGITDGLLFDGVKFEKDCTRTSSLVISTLDSTCRFTNTIHMKDGAKSISL</sequence>
<accession>Q7V1T8</accession>
<proteinExistence type="inferred from homology"/>